<organism>
    <name type="scientific">Saccharopolyspora spinosa</name>
    <dbReference type="NCBI Taxonomy" id="60894"/>
    <lineage>
        <taxon>Bacteria</taxon>
        <taxon>Bacillati</taxon>
        <taxon>Actinomycetota</taxon>
        <taxon>Actinomycetes</taxon>
        <taxon>Pseudonocardiales</taxon>
        <taxon>Pseudonocardiaceae</taxon>
        <taxon>Saccharopolyspora</taxon>
    </lineage>
</organism>
<proteinExistence type="evidence at protein level"/>
<feature type="chain" id="PRO_0000444370" description="dTDP-4-dehydro-2,6-dideoxy-D-glucose 3-dehydratase">
    <location>
        <begin position="1"/>
        <end position="462"/>
    </location>
</feature>
<feature type="active site" description="Proton donor/acceptor" evidence="1">
    <location>
        <position position="246"/>
    </location>
</feature>
<feature type="binding site" description="in other chain" evidence="1">
    <location>
        <begin position="112"/>
        <end position="113"/>
    </location>
    <ligand>
        <name>pyridoxal 5'-phosphate</name>
        <dbReference type="ChEBI" id="CHEBI:597326"/>
        <note>ligand shared between dimeric partners</note>
    </ligand>
</feature>
<feature type="binding site" description="in other chain" evidence="1">
    <location>
        <position position="220"/>
    </location>
    <ligand>
        <name>pyridoxal 5'-phosphate</name>
        <dbReference type="ChEBI" id="CHEBI:597326"/>
        <note>ligand shared between dimeric partners</note>
    </ligand>
</feature>
<feature type="binding site" description="in other chain" evidence="1">
    <location>
        <position position="241"/>
    </location>
    <ligand>
        <name>pyridoxal 5'-phosphate</name>
        <dbReference type="ChEBI" id="CHEBI:597326"/>
        <note>ligand shared between dimeric partners</note>
    </ligand>
</feature>
<feature type="binding site" evidence="1">
    <location>
        <position position="314"/>
    </location>
    <ligand>
        <name>pyridoxal 5'-phosphate</name>
        <dbReference type="ChEBI" id="CHEBI:597326"/>
        <note>ligand shared between dimeric partners</note>
    </ligand>
</feature>
<reference key="1">
    <citation type="journal article" date="2001" name="Chem. Biol.">
        <title>Cloning and analysis of the spinosad biosynthetic gene cluster of Saccharopolyspora spinosa.</title>
        <authorList>
            <person name="Waldron C."/>
            <person name="Matsushima P."/>
            <person name="Rosteck P.R. Jr."/>
            <person name="Broughton M.C."/>
            <person name="Turner J."/>
            <person name="Madduri K."/>
            <person name="Crawford K.P."/>
            <person name="Merlo D.J."/>
            <person name="Baltz R.H."/>
        </authorList>
    </citation>
    <scope>NUCLEOTIDE SEQUENCE [GENOMIC DNA]</scope>
    <scope>FUNCTION</scope>
</reference>
<reference key="2">
    <citation type="journal article" date="2008" name="J. Am. Chem. Soc.">
        <title>In vitro characterization of the enzymes involved in TDP-D-forosamine biosynthesis in the spinosyn pathway of Saccharopolyspora spinosa.</title>
        <authorList>
            <person name="Hong L."/>
            <person name="Zhao Z."/>
            <person name="Melancon C.E. III"/>
            <person name="Zhang H."/>
            <person name="Liu H.W."/>
        </authorList>
    </citation>
    <scope>PROTEIN SEQUENCE OF N-TERMINUS</scope>
    <scope>FUNCTION</scope>
    <scope>CATALYTIC ACTIVITY</scope>
    <scope>BIOPHYSICOCHEMICAL PROPERTIES</scope>
    <scope>COFACTOR</scope>
    <scope>SUBUNIT</scope>
    <scope>SUBSTRATE SPECIFICITY</scope>
    <scope>REACTION MECHANISM</scope>
    <source>
        <strain>NRRL 18537</strain>
    </source>
</reference>
<comment type="function">
    <text evidence="2 3">Involved in the biosynthesis of forosamine ((4-dimethylamino)-2,3,4,6-tetradeoxy-alpha-D-threo-hexopyranose), a highly deoxygenated sugar component of several bioactive natural products such as the insecticidal spinosyns A and D (PubMed:11358695, PubMed:18345667). Catalyzes C-3 deoxygenation of dTDP-4-keto-2,6-dideoxy-alpha-D-glucose to yield dTDP-4-keto-2,3,6-trideoxy-D-glucose via a combined transamination-deoxygenation reaction (PubMed:18345667). The catalysis is initiated by a transamination step in which pyridoxal 5'-phosphate (PLP) is converted to pyridoxamine 5'-phosphate (PMP) in the presence of L-glutamate (PubMed:18345667). This coenzyme then forms a Schiff base with dTDP-4-keto-2,6-dideoxy-alpha-D-glucose and the resulting adduct undergoes a PMP-mediated beta-dehydration reaction to give a sugar enamine intermediate, which after a 2 electrons reduction and hydrolysis yields dTDP-4-keto-2,3,6-trideoxy-D-glucose as a product (PubMed:18345667). Requires cellular reductase (ferredoxin or flavodoxin reductase) rather than a specific partner reductase (PubMed:18345667). L-glutamate is 20-fold more efficient than L-aspartate as an amino donor (PubMed:18345667). In the absence of an electron source and in the presence of L-glutamate, catalyzes a transamination reaction, converting dTDP-4-keto-2,6-dideoxy-alpha-D-glucose to dTDP-4-amino-2,4,6-trideoxy-D-glucose (PubMed:18345667).</text>
</comment>
<comment type="catalytic activity">
    <reaction evidence="3">
        <text>dTDP-4-dehydro-2,6-dideoxy-alpha-D-glucose + 2 reduced [2Fe-2S]-[ferredoxin] + 2 H(+) = dTDP-4-dehydro-2,3,6-trideoxy-alpha-D-hexopyranose + 2 oxidized [2Fe-2S]-[ferredoxin] + H2O</text>
        <dbReference type="Rhea" id="RHEA:49140"/>
        <dbReference type="Rhea" id="RHEA-COMP:10000"/>
        <dbReference type="Rhea" id="RHEA-COMP:10001"/>
        <dbReference type="ChEBI" id="CHEBI:15377"/>
        <dbReference type="ChEBI" id="CHEBI:15378"/>
        <dbReference type="ChEBI" id="CHEBI:33737"/>
        <dbReference type="ChEBI" id="CHEBI:33738"/>
        <dbReference type="ChEBI" id="CHEBI:84537"/>
        <dbReference type="ChEBI" id="CHEBI:90944"/>
        <dbReference type="EC" id="4.2.1.164"/>
    </reaction>
</comment>
<comment type="cofactor">
    <cofactor evidence="7">
        <name>pyridoxal 5'-phosphate</name>
        <dbReference type="ChEBI" id="CHEBI:597326"/>
    </cofactor>
</comment>
<comment type="biophysicochemical properties">
    <kinetics>
        <KM evidence="3">49 uM for dTDP-4-keto-2,6-dideoxy-alpha-D-glucose</KM>
        <text evidence="3">kcat is 2.6 min(-1) for dTDP-4-keto-2,6-dideoxy-alpha-D-glucose as substrate.</text>
    </kinetics>
    <phDependence>
        <text evidence="3">Optimum pH is 7.5.</text>
    </phDependence>
    <temperatureDependence>
        <text evidence="3">Optimum temperature is 37 degrees Celsius.</text>
    </temperatureDependence>
</comment>
<comment type="subunit">
    <text evidence="3">Homodimer.</text>
</comment>
<comment type="similarity">
    <text evidence="6">Belongs to the DegT/DnrJ/EryC1 family.</text>
</comment>
<dbReference type="EC" id="4.2.1.164" evidence="3"/>
<dbReference type="EMBL" id="AY007564">
    <property type="protein sequence ID" value="AAG23278.1"/>
    <property type="molecule type" value="Genomic_DNA"/>
</dbReference>
<dbReference type="SMR" id="Q9ALN8"/>
<dbReference type="STRING" id="994479.GCA_000194155_04545"/>
<dbReference type="KEGG" id="ag:AAG23278"/>
<dbReference type="BioCyc" id="MetaCyc:MONOMER-16621"/>
<dbReference type="BRENDA" id="4.2.1.164">
    <property type="organism ID" value="13744"/>
</dbReference>
<dbReference type="GO" id="GO:0016829">
    <property type="term" value="F:lyase activity"/>
    <property type="evidence" value="ECO:0007669"/>
    <property type="project" value="UniProtKB-KW"/>
</dbReference>
<dbReference type="GO" id="GO:0030170">
    <property type="term" value="F:pyridoxal phosphate binding"/>
    <property type="evidence" value="ECO:0007669"/>
    <property type="project" value="TreeGrafter"/>
</dbReference>
<dbReference type="GO" id="GO:0008483">
    <property type="term" value="F:transaminase activity"/>
    <property type="evidence" value="ECO:0007669"/>
    <property type="project" value="TreeGrafter"/>
</dbReference>
<dbReference type="GO" id="GO:0000271">
    <property type="term" value="P:polysaccharide biosynthetic process"/>
    <property type="evidence" value="ECO:0007669"/>
    <property type="project" value="TreeGrafter"/>
</dbReference>
<dbReference type="CDD" id="cd00616">
    <property type="entry name" value="AHBA_syn"/>
    <property type="match status" value="1"/>
</dbReference>
<dbReference type="FunFam" id="3.40.640.10:FF:000079">
    <property type="entry name" value="LPS biosynthesis protein"/>
    <property type="match status" value="1"/>
</dbReference>
<dbReference type="Gene3D" id="3.90.1150.10">
    <property type="entry name" value="Aspartate Aminotransferase, domain 1"/>
    <property type="match status" value="1"/>
</dbReference>
<dbReference type="Gene3D" id="3.40.640.10">
    <property type="entry name" value="Type I PLP-dependent aspartate aminotransferase-like (Major domain)"/>
    <property type="match status" value="1"/>
</dbReference>
<dbReference type="InterPro" id="IPR000653">
    <property type="entry name" value="DegT/StrS_aminotransferase"/>
</dbReference>
<dbReference type="InterPro" id="IPR015424">
    <property type="entry name" value="PyrdxlP-dep_Trfase"/>
</dbReference>
<dbReference type="InterPro" id="IPR015421">
    <property type="entry name" value="PyrdxlP-dep_Trfase_major"/>
</dbReference>
<dbReference type="InterPro" id="IPR015422">
    <property type="entry name" value="PyrdxlP-dep_Trfase_small"/>
</dbReference>
<dbReference type="NCBIfam" id="NF011936">
    <property type="entry name" value="PRK15407.1"/>
    <property type="match status" value="1"/>
</dbReference>
<dbReference type="PANTHER" id="PTHR30244:SF34">
    <property type="entry name" value="DTDP-4-AMINO-4,6-DIDEOXYGALACTOSE TRANSAMINASE"/>
    <property type="match status" value="1"/>
</dbReference>
<dbReference type="PANTHER" id="PTHR30244">
    <property type="entry name" value="TRANSAMINASE"/>
    <property type="match status" value="1"/>
</dbReference>
<dbReference type="Pfam" id="PF01041">
    <property type="entry name" value="DegT_DnrJ_EryC1"/>
    <property type="match status" value="1"/>
</dbReference>
<dbReference type="SUPFAM" id="SSF53383">
    <property type="entry name" value="PLP-dependent transferases"/>
    <property type="match status" value="1"/>
</dbReference>
<sequence>MQSRKTRALGKGRARVTSCDDTCATATEMVPDAKDRILASVRDYHREQESPTFVAGSTPIRPSGAVLDEDDRVALVEAALELRIAAGGNARRFESEFARFFGLRKAHLVNSGSSANLLALSSLTSPKLGEARLRPGDEVITAAVGFPTTINPAVQNGLVPVFVDVELGTYNATPDRIKAAVTERTRAIMLAHTLGNPFAADEIAEIAKEHELFLVEDNCDAVGSTYRGRLTGTFGDLTTVSFYPAHHITSGEGGCVLTGSLELARIIESLRDWGRDCWCEPGVDNTCRKRFDYHLGTLPPGYDHKYTFSHVGYNLKTTDLQAALALSQLSKISAFGSARRRNWRRLREGLSGLPGLLLPVATPHSDPSWFGFAITISADAGFTRAALVNFLESRNIGTRLLFGGNITRHPAFEQVRYRIADALTNSDIVTDRTFWVGVYPGITDQMIDYVVESIAEFVAKSS</sequence>
<name>SPNQ_SACSN</name>
<evidence type="ECO:0000250" key="1">
    <source>
        <dbReference type="UniProtKB" id="D3QY10"/>
    </source>
</evidence>
<evidence type="ECO:0000269" key="2">
    <source>
    </source>
</evidence>
<evidence type="ECO:0000269" key="3">
    <source>
    </source>
</evidence>
<evidence type="ECO:0000303" key="4">
    <source>
    </source>
</evidence>
<evidence type="ECO:0000303" key="5">
    <source>
    </source>
</evidence>
<evidence type="ECO:0000305" key="6"/>
<evidence type="ECO:0000305" key="7">
    <source>
    </source>
</evidence>
<accession>Q9ALN8</accession>
<protein>
    <recommendedName>
        <fullName evidence="5">dTDP-4-dehydro-2,6-dideoxy-D-glucose 3-dehydratase</fullName>
        <ecNumber evidence="3">4.2.1.164</ecNumber>
    </recommendedName>
    <alternativeName>
        <fullName evidence="5">Pyridoxamine 5'-monophosphate-dependent 3-dehydrase</fullName>
    </alternativeName>
</protein>
<gene>
    <name evidence="4" type="primary">spnQ</name>
</gene>
<keyword id="KW-0903">Direct protein sequencing</keyword>
<keyword id="KW-0456">Lyase</keyword>
<keyword id="KW-0663">Pyridoxal phosphate</keyword>